<reference key="1">
    <citation type="journal article" date="2009" name="Genome Biol.">
        <title>Genomic and genetic analyses of diversity and plant interactions of Pseudomonas fluorescens.</title>
        <authorList>
            <person name="Silby M.W."/>
            <person name="Cerdeno-Tarraga A.M."/>
            <person name="Vernikos G.S."/>
            <person name="Giddens S.R."/>
            <person name="Jackson R.W."/>
            <person name="Preston G.M."/>
            <person name="Zhang X.-X."/>
            <person name="Moon C.D."/>
            <person name="Gehrig S.M."/>
            <person name="Godfrey S.A.C."/>
            <person name="Knight C.G."/>
            <person name="Malone J.G."/>
            <person name="Robinson Z."/>
            <person name="Spiers A.J."/>
            <person name="Harris S."/>
            <person name="Challis G.L."/>
            <person name="Yaxley A.M."/>
            <person name="Harris D."/>
            <person name="Seeger K."/>
            <person name="Murphy L."/>
            <person name="Rutter S."/>
            <person name="Squares R."/>
            <person name="Quail M.A."/>
            <person name="Saunders E."/>
            <person name="Mavromatis K."/>
            <person name="Brettin T.S."/>
            <person name="Bentley S.D."/>
            <person name="Hothersall J."/>
            <person name="Stephens E."/>
            <person name="Thomas C.M."/>
            <person name="Parkhill J."/>
            <person name="Levy S.B."/>
            <person name="Rainey P.B."/>
            <person name="Thomson N.R."/>
        </authorList>
    </citation>
    <scope>NUCLEOTIDE SEQUENCE [LARGE SCALE GENOMIC DNA]</scope>
    <source>
        <strain>Pf0-1</strain>
    </source>
</reference>
<feature type="chain" id="PRO_1000016967" description="Ribose-5-phosphate isomerase A">
    <location>
        <begin position="1"/>
        <end position="224"/>
    </location>
</feature>
<feature type="active site" description="Proton acceptor" evidence="1">
    <location>
        <position position="107"/>
    </location>
</feature>
<feature type="binding site" evidence="1">
    <location>
        <begin position="32"/>
        <end position="35"/>
    </location>
    <ligand>
        <name>substrate</name>
    </ligand>
</feature>
<feature type="binding site" evidence="1">
    <location>
        <begin position="85"/>
        <end position="88"/>
    </location>
    <ligand>
        <name>substrate</name>
    </ligand>
</feature>
<feature type="binding site" evidence="1">
    <location>
        <begin position="98"/>
        <end position="101"/>
    </location>
    <ligand>
        <name>substrate</name>
    </ligand>
</feature>
<feature type="binding site" evidence="1">
    <location>
        <position position="125"/>
    </location>
    <ligand>
        <name>substrate</name>
    </ligand>
</feature>
<name>RPIA_PSEPF</name>
<protein>
    <recommendedName>
        <fullName evidence="1">Ribose-5-phosphate isomerase A</fullName>
        <ecNumber evidence="1">5.3.1.6</ecNumber>
    </recommendedName>
    <alternativeName>
        <fullName evidence="1">Phosphoriboisomerase A</fullName>
        <shortName evidence="1">PRI</shortName>
    </alternativeName>
</protein>
<proteinExistence type="inferred from homology"/>
<organism>
    <name type="scientific">Pseudomonas fluorescens (strain Pf0-1)</name>
    <dbReference type="NCBI Taxonomy" id="205922"/>
    <lineage>
        <taxon>Bacteria</taxon>
        <taxon>Pseudomonadati</taxon>
        <taxon>Pseudomonadota</taxon>
        <taxon>Gammaproteobacteria</taxon>
        <taxon>Pseudomonadales</taxon>
        <taxon>Pseudomonadaceae</taxon>
        <taxon>Pseudomonas</taxon>
    </lineage>
</organism>
<evidence type="ECO:0000255" key="1">
    <source>
        <dbReference type="HAMAP-Rule" id="MF_00170"/>
    </source>
</evidence>
<sequence>MTQDQLKQAVAQAAVDFILPKLDDKSIVGVGTGSTANCFIDALAQHKGAFDGAVASSEATAARLKGHGIPVYELNTVSNLEFYVDGADESDEHLNLIKGGGAALTREKIVAAVAQTFICIADASKLVPVLGAFPLPVEVIPMARSHVARQLVKLGGDPVYREGVLTDNGNIILDVHNLQITNPVELEAQINAIVGVVTNGLFAARPADLLLLGTSEGVKTLKAE</sequence>
<keyword id="KW-0413">Isomerase</keyword>
<gene>
    <name evidence="1" type="primary">rpiA</name>
    <name type="ordered locus">Pfl01_5382</name>
</gene>
<accession>Q3K535</accession>
<comment type="function">
    <text evidence="1">Catalyzes the reversible conversion of ribose-5-phosphate to ribulose 5-phosphate.</text>
</comment>
<comment type="catalytic activity">
    <reaction evidence="1">
        <text>aldehydo-D-ribose 5-phosphate = D-ribulose 5-phosphate</text>
        <dbReference type="Rhea" id="RHEA:14657"/>
        <dbReference type="ChEBI" id="CHEBI:58121"/>
        <dbReference type="ChEBI" id="CHEBI:58273"/>
        <dbReference type="EC" id="5.3.1.6"/>
    </reaction>
</comment>
<comment type="pathway">
    <text evidence="1">Carbohydrate degradation; pentose phosphate pathway; D-ribose 5-phosphate from D-ribulose 5-phosphate (non-oxidative stage): step 1/1.</text>
</comment>
<comment type="subunit">
    <text evidence="1">Homodimer.</text>
</comment>
<comment type="similarity">
    <text evidence="1">Belongs to the ribose 5-phosphate isomerase family.</text>
</comment>
<dbReference type="EC" id="5.3.1.6" evidence="1"/>
<dbReference type="EMBL" id="CP000094">
    <property type="protein sequence ID" value="ABA77119.1"/>
    <property type="molecule type" value="Genomic_DNA"/>
</dbReference>
<dbReference type="RefSeq" id="WP_007953476.1">
    <property type="nucleotide sequence ID" value="NC_007492.2"/>
</dbReference>
<dbReference type="SMR" id="Q3K535"/>
<dbReference type="KEGG" id="pfo:Pfl01_5382"/>
<dbReference type="eggNOG" id="COG0120">
    <property type="taxonomic scope" value="Bacteria"/>
</dbReference>
<dbReference type="HOGENOM" id="CLU_056590_1_1_6"/>
<dbReference type="UniPathway" id="UPA00115">
    <property type="reaction ID" value="UER00412"/>
</dbReference>
<dbReference type="Proteomes" id="UP000002704">
    <property type="component" value="Chromosome"/>
</dbReference>
<dbReference type="GO" id="GO:0005829">
    <property type="term" value="C:cytosol"/>
    <property type="evidence" value="ECO:0007669"/>
    <property type="project" value="TreeGrafter"/>
</dbReference>
<dbReference type="GO" id="GO:0004751">
    <property type="term" value="F:ribose-5-phosphate isomerase activity"/>
    <property type="evidence" value="ECO:0007669"/>
    <property type="project" value="UniProtKB-UniRule"/>
</dbReference>
<dbReference type="GO" id="GO:0006014">
    <property type="term" value="P:D-ribose metabolic process"/>
    <property type="evidence" value="ECO:0007669"/>
    <property type="project" value="TreeGrafter"/>
</dbReference>
<dbReference type="GO" id="GO:0009052">
    <property type="term" value="P:pentose-phosphate shunt, non-oxidative branch"/>
    <property type="evidence" value="ECO:0007669"/>
    <property type="project" value="UniProtKB-UniRule"/>
</dbReference>
<dbReference type="CDD" id="cd01398">
    <property type="entry name" value="RPI_A"/>
    <property type="match status" value="1"/>
</dbReference>
<dbReference type="FunFam" id="3.30.70.260:FF:000004">
    <property type="entry name" value="Ribose-5-phosphate isomerase A"/>
    <property type="match status" value="1"/>
</dbReference>
<dbReference type="FunFam" id="3.40.50.1360:FF:000001">
    <property type="entry name" value="Ribose-5-phosphate isomerase A"/>
    <property type="match status" value="1"/>
</dbReference>
<dbReference type="Gene3D" id="3.30.70.260">
    <property type="match status" value="1"/>
</dbReference>
<dbReference type="Gene3D" id="3.40.50.1360">
    <property type="match status" value="1"/>
</dbReference>
<dbReference type="HAMAP" id="MF_00170">
    <property type="entry name" value="Rib_5P_isom_A"/>
    <property type="match status" value="1"/>
</dbReference>
<dbReference type="InterPro" id="IPR037171">
    <property type="entry name" value="NagB/RpiA_transferase-like"/>
</dbReference>
<dbReference type="InterPro" id="IPR020672">
    <property type="entry name" value="Ribose5P_isomerase_typA_subgr"/>
</dbReference>
<dbReference type="InterPro" id="IPR004788">
    <property type="entry name" value="Ribose5P_isomerase_type_A"/>
</dbReference>
<dbReference type="NCBIfam" id="NF001924">
    <property type="entry name" value="PRK00702.1"/>
    <property type="match status" value="1"/>
</dbReference>
<dbReference type="NCBIfam" id="TIGR00021">
    <property type="entry name" value="rpiA"/>
    <property type="match status" value="1"/>
</dbReference>
<dbReference type="PANTHER" id="PTHR11934">
    <property type="entry name" value="RIBOSE-5-PHOSPHATE ISOMERASE"/>
    <property type="match status" value="1"/>
</dbReference>
<dbReference type="PANTHER" id="PTHR11934:SF0">
    <property type="entry name" value="RIBOSE-5-PHOSPHATE ISOMERASE"/>
    <property type="match status" value="1"/>
</dbReference>
<dbReference type="Pfam" id="PF06026">
    <property type="entry name" value="Rib_5-P_isom_A"/>
    <property type="match status" value="1"/>
</dbReference>
<dbReference type="SUPFAM" id="SSF75445">
    <property type="entry name" value="D-ribose-5-phosphate isomerase (RpiA), lid domain"/>
    <property type="match status" value="1"/>
</dbReference>
<dbReference type="SUPFAM" id="SSF100950">
    <property type="entry name" value="NagB/RpiA/CoA transferase-like"/>
    <property type="match status" value="1"/>
</dbReference>